<comment type="function">
    <text evidence="3 5">Snake venom VEGFs may contribute to venom dispersion and prey subjugation by inducing vascular permeability and hypotension. This protein increases vascular permeability and angiogenesis probably through VEGF receptor (KDR/VEGFR-2) signaling (PubMed:12021274). Induces DNA synthesis in human umbilical vein endothelial cells, and promotes mouse embryonic stem cell proliferation and differentiation (PubMed:12021274). It may also induce a drastic hypotensive effect after intravenous injection (By similarity). The hypotension is mediated by nitric oxide (NO), which is produced by VEGF-activated endothelium NO synthase (By similarity).</text>
</comment>
<comment type="subunit">
    <text evidence="4 5 6">Homodimer; disulfide-linked (PubMed:10652214, PubMed:12021274). Interacts with high affinity with KDR/VEGFR-2, and with a lower affinity with neuropilin-1 (NRP1) and neuropilin-2 (NRP2) (PubMed:19695228).</text>
</comment>
<comment type="subcellular location">
    <subcellularLocation>
        <location evidence="4 5">Secreted</location>
    </subcellularLocation>
</comment>
<comment type="tissue specificity">
    <text evidence="4 5">Expressed by the venom gland.</text>
</comment>
<comment type="mass spectrometry" mass="25115.0" method="MALDI" evidence="5"/>
<comment type="similarity">
    <text evidence="9">Belongs to the PDGF/VEGF growth factor family. Snake venom VEGF subfamily.</text>
</comment>
<reference key="1">
    <citation type="journal article" date="2002" name="J. Biol. Chem.">
        <title>Complete structure of an increasing capillary permeability protein (ICPP) purified from Vipera lebetina venom. ICPP is angiogenic via vascular endothelial growth factor receptor signalling.</title>
        <authorList>
            <person name="Gasmi A."/>
            <person name="Bourcier C."/>
            <person name="Aloui Z."/>
            <person name="Srairi N."/>
            <person name="Marchetti S."/>
            <person name="Gimond C."/>
            <person name="Wedge S.R."/>
            <person name="Hennequin L."/>
            <person name="Pouyssegur J."/>
        </authorList>
    </citation>
    <scope>PROTEIN SEQUENCE</scope>
    <scope>FUNCTION</scope>
    <scope>SUBUNIT</scope>
    <scope>SUBCELLULAR LOCATION</scope>
    <scope>MASS SPECTROMETRY</scope>
    <scope>PYROGLUTAMATE FORMATION AT GLN-1</scope>
    <source>
        <tissue>Venom</tissue>
    </source>
</reference>
<reference key="2">
    <citation type="journal article" date="2000" name="Biochem. Biophys. Res. Commun.">
        <title>Purification and characterization of a growth factor-like which increases capillary permeability from Vipera lebetina venom.</title>
        <authorList>
            <person name="Gasmi A."/>
            <person name="Abidi F."/>
            <person name="Srairi N."/>
            <person name="Oijatayer A."/>
            <person name="Karoui H."/>
            <person name="Elayeb M."/>
        </authorList>
    </citation>
    <scope>PROTEIN SEQUENCE OF 1-28</scope>
    <scope>SUBUNIT</scope>
    <scope>SUBCELLULAR LOCATION</scope>
    <source>
        <tissue>Venom</tissue>
    </source>
</reference>
<reference key="3">
    <citation type="journal article" date="2009" name="Biochem. Biophys. Res. Commun.">
        <title>Novel svVEGF isoforms from Macrovipera lebetina venom interact with neuropilins.</title>
        <authorList>
            <person name="Aloui Z."/>
            <person name="Hoos S."/>
            <person name="Geretti E."/>
            <person name="Kharmachi H."/>
            <person name="Haumont P.Y."/>
            <person name="Mejdoub H."/>
            <person name="Klagsbrun M."/>
            <person name="England P."/>
            <person name="Gasmi A."/>
        </authorList>
    </citation>
    <scope>INTERACTION WITH KDR; NRP1 AND NRP2</scope>
    <scope>IDENTIFICATION BY MASS SPECTROMETRY</scope>
    <source>
        <tissue>Venom</tissue>
    </source>
</reference>
<accession>P82475</accession>
<protein>
    <recommendedName>
        <fullName evidence="7">Snake venom vascular endothelial growth factor toxin ICPP</fullName>
        <shortName>svVEGF</shortName>
    </recommendedName>
    <alternativeName>
        <fullName evidence="7">Increasing capillary permeability protein</fullName>
    </alternativeName>
    <alternativeName>
        <fullName evidence="8">Increasing capillary-2</fullName>
        <shortName evidence="8">IC2</shortName>
    </alternativeName>
    <alternativeName>
        <fullName evidence="1">VEGF-F</fullName>
    </alternativeName>
</protein>
<proteinExistence type="evidence at protein level"/>
<name>TXVE2_MACLB</name>
<organism>
    <name type="scientific">Macrovipera lebetinus</name>
    <name type="common">Levantine viper</name>
    <name type="synonym">Vipera lebetina</name>
    <dbReference type="NCBI Taxonomy" id="3148341"/>
    <lineage>
        <taxon>Eukaryota</taxon>
        <taxon>Metazoa</taxon>
        <taxon>Chordata</taxon>
        <taxon>Craniata</taxon>
        <taxon>Vertebrata</taxon>
        <taxon>Euteleostomi</taxon>
        <taxon>Lepidosauria</taxon>
        <taxon>Squamata</taxon>
        <taxon>Bifurcata</taxon>
        <taxon>Unidentata</taxon>
        <taxon>Episquamata</taxon>
        <taxon>Toxicofera</taxon>
        <taxon>Serpentes</taxon>
        <taxon>Colubroidea</taxon>
        <taxon>Viperidae</taxon>
        <taxon>Viperinae</taxon>
        <taxon>Macrovipera</taxon>
    </lineage>
</organism>
<evidence type="ECO:0000250" key="1">
    <source>
        <dbReference type="UniProtKB" id="P0DL42"/>
    </source>
</evidence>
<evidence type="ECO:0000250" key="2">
    <source>
        <dbReference type="UniProtKB" id="P67863"/>
    </source>
</evidence>
<evidence type="ECO:0000250" key="3">
    <source>
        <dbReference type="UniProtKB" id="P83942"/>
    </source>
</evidence>
<evidence type="ECO:0000269" key="4">
    <source>
    </source>
</evidence>
<evidence type="ECO:0000269" key="5">
    <source>
    </source>
</evidence>
<evidence type="ECO:0000269" key="6">
    <source>
    </source>
</evidence>
<evidence type="ECO:0000303" key="7">
    <source>
    </source>
</evidence>
<evidence type="ECO:0000303" key="8">
    <source>
    </source>
</evidence>
<evidence type="ECO:0000305" key="9"/>
<feature type="chain" id="PRO_0000162365" description="Snake venom vascular endothelial growth factor toxin ICPP">
    <location>
        <begin position="1"/>
        <end position="110"/>
    </location>
</feature>
<feature type="modified residue" description="Pyrrolidone carboxylic acid" evidence="5">
    <location>
        <position position="1"/>
    </location>
</feature>
<feature type="disulfide bond" evidence="2">
    <location>
        <begin position="14"/>
        <end position="56"/>
    </location>
</feature>
<feature type="disulfide bond" description="Interchain (with C-48)" evidence="2">
    <location>
        <position position="39"/>
    </location>
</feature>
<feature type="disulfide bond" evidence="2">
    <location>
        <begin position="45"/>
        <end position="91"/>
    </location>
</feature>
<feature type="disulfide bond" description="Interchain (with C-39)" evidence="2">
    <location>
        <position position="48"/>
    </location>
</feature>
<feature type="disulfide bond" evidence="2">
    <location>
        <begin position="49"/>
        <end position="93"/>
    </location>
</feature>
<keyword id="KW-0903">Direct protein sequencing</keyword>
<keyword id="KW-1015">Disulfide bond</keyword>
<keyword id="KW-0339">Growth factor</keyword>
<keyword id="KW-0873">Pyrrolidone carboxylic acid</keyword>
<keyword id="KW-0964">Secreted</keyword>
<keyword id="KW-0800">Toxin</keyword>
<sequence length="110" mass="12574">QVRPFPDVYQRSACQARETLVSILQEYPDEISDIFRPSCVAVLRCSGCCTDESLKCTPVGKHTVDMQIMRVNPRTQSSKMEVMKFTEHTACECRPRRKQGEPDGPKEKPR</sequence>
<dbReference type="SMR" id="P82475"/>
<dbReference type="GO" id="GO:0005615">
    <property type="term" value="C:extracellular space"/>
    <property type="evidence" value="ECO:0007669"/>
    <property type="project" value="TreeGrafter"/>
</dbReference>
<dbReference type="GO" id="GO:0016020">
    <property type="term" value="C:membrane"/>
    <property type="evidence" value="ECO:0007669"/>
    <property type="project" value="InterPro"/>
</dbReference>
<dbReference type="GO" id="GO:0042056">
    <property type="term" value="F:chemoattractant activity"/>
    <property type="evidence" value="ECO:0007669"/>
    <property type="project" value="TreeGrafter"/>
</dbReference>
<dbReference type="GO" id="GO:0008083">
    <property type="term" value="F:growth factor activity"/>
    <property type="evidence" value="ECO:0007669"/>
    <property type="project" value="UniProtKB-KW"/>
</dbReference>
<dbReference type="GO" id="GO:0090729">
    <property type="term" value="F:toxin activity"/>
    <property type="evidence" value="ECO:0007669"/>
    <property type="project" value="UniProtKB-KW"/>
</dbReference>
<dbReference type="GO" id="GO:0005172">
    <property type="term" value="F:vascular endothelial growth factor receptor binding"/>
    <property type="evidence" value="ECO:0007669"/>
    <property type="project" value="TreeGrafter"/>
</dbReference>
<dbReference type="GO" id="GO:0050930">
    <property type="term" value="P:induction of positive chemotaxis"/>
    <property type="evidence" value="ECO:0007669"/>
    <property type="project" value="TreeGrafter"/>
</dbReference>
<dbReference type="GO" id="GO:0045766">
    <property type="term" value="P:positive regulation of angiogenesis"/>
    <property type="evidence" value="ECO:0007669"/>
    <property type="project" value="TreeGrafter"/>
</dbReference>
<dbReference type="GO" id="GO:0001938">
    <property type="term" value="P:positive regulation of endothelial cell proliferation"/>
    <property type="evidence" value="ECO:0007669"/>
    <property type="project" value="TreeGrafter"/>
</dbReference>
<dbReference type="GO" id="GO:0060754">
    <property type="term" value="P:positive regulation of mast cell chemotaxis"/>
    <property type="evidence" value="ECO:0007669"/>
    <property type="project" value="TreeGrafter"/>
</dbReference>
<dbReference type="GO" id="GO:0001666">
    <property type="term" value="P:response to hypoxia"/>
    <property type="evidence" value="ECO:0007669"/>
    <property type="project" value="TreeGrafter"/>
</dbReference>
<dbReference type="GO" id="GO:0002040">
    <property type="term" value="P:sprouting angiogenesis"/>
    <property type="evidence" value="ECO:0007669"/>
    <property type="project" value="TreeGrafter"/>
</dbReference>
<dbReference type="GO" id="GO:0048010">
    <property type="term" value="P:vascular endothelial growth factor receptor signaling pathway"/>
    <property type="evidence" value="ECO:0007669"/>
    <property type="project" value="TreeGrafter"/>
</dbReference>
<dbReference type="GO" id="GO:0038084">
    <property type="term" value="P:vascular endothelial growth factor signaling pathway"/>
    <property type="evidence" value="ECO:0007669"/>
    <property type="project" value="TreeGrafter"/>
</dbReference>
<dbReference type="CDD" id="cd00135">
    <property type="entry name" value="PDGF"/>
    <property type="match status" value="1"/>
</dbReference>
<dbReference type="FunFam" id="2.10.90.10:FF:000030">
    <property type="entry name" value="Vascular endothelial growth factor B"/>
    <property type="match status" value="1"/>
</dbReference>
<dbReference type="Gene3D" id="2.10.90.10">
    <property type="entry name" value="Cystine-knot cytokines"/>
    <property type="match status" value="1"/>
</dbReference>
<dbReference type="InterPro" id="IPR029034">
    <property type="entry name" value="Cystine-knot_cytokine"/>
</dbReference>
<dbReference type="InterPro" id="IPR023581">
    <property type="entry name" value="PD_growth_factor_CS"/>
</dbReference>
<dbReference type="InterPro" id="IPR000072">
    <property type="entry name" value="PDGF/VEGF_dom"/>
</dbReference>
<dbReference type="InterPro" id="IPR050507">
    <property type="entry name" value="PDGF/VEGF_growth_factor"/>
</dbReference>
<dbReference type="PANTHER" id="PTHR12025">
    <property type="entry name" value="VASCULAR ENDOTHELIAL GROWTH FACTOR"/>
    <property type="match status" value="1"/>
</dbReference>
<dbReference type="PANTHER" id="PTHR12025:SF5">
    <property type="entry name" value="VASCULAR ENDOTHELIAL GROWTH FACTOR A, LONG FORM"/>
    <property type="match status" value="1"/>
</dbReference>
<dbReference type="Pfam" id="PF00341">
    <property type="entry name" value="PDGF"/>
    <property type="match status" value="1"/>
</dbReference>
<dbReference type="SMART" id="SM00141">
    <property type="entry name" value="PDGF"/>
    <property type="match status" value="1"/>
</dbReference>
<dbReference type="SUPFAM" id="SSF57501">
    <property type="entry name" value="Cystine-knot cytokines"/>
    <property type="match status" value="1"/>
</dbReference>
<dbReference type="PROSITE" id="PS00249">
    <property type="entry name" value="PDGF_1"/>
    <property type="match status" value="1"/>
</dbReference>
<dbReference type="PROSITE" id="PS50278">
    <property type="entry name" value="PDGF_2"/>
    <property type="match status" value="1"/>
</dbReference>